<keyword id="KW-1204">Blood coagulation cascade activating toxin</keyword>
<keyword id="KW-0106">Calcium</keyword>
<keyword id="KW-0903">Direct protein sequencing</keyword>
<keyword id="KW-1015">Disulfide bond</keyword>
<keyword id="KW-0245">EGF-like domain</keyword>
<keyword id="KW-0301">Gamma-carboxyglutamic acid</keyword>
<keyword id="KW-1199">Hemostasis impairing toxin</keyword>
<keyword id="KW-0378">Hydrolase</keyword>
<keyword id="KW-0645">Protease</keyword>
<keyword id="KW-0655">Prothrombin activator</keyword>
<keyword id="KW-0964">Secreted</keyword>
<keyword id="KW-0800">Toxin</keyword>
<name>FAXD_NOTSN</name>
<organism>
    <name type="scientific">Notechis scutatus niger</name>
    <name type="common">Peninsula tiger snake</name>
    <name type="synonym">Notechis ater niger</name>
    <dbReference type="NCBI Taxonomy" id="1027870"/>
    <lineage>
        <taxon>Eukaryota</taxon>
        <taxon>Metazoa</taxon>
        <taxon>Chordata</taxon>
        <taxon>Craniata</taxon>
        <taxon>Vertebrata</taxon>
        <taxon>Euteleostomi</taxon>
        <taxon>Lepidosauria</taxon>
        <taxon>Squamata</taxon>
        <taxon>Bifurcata</taxon>
        <taxon>Unidentata</taxon>
        <taxon>Episquamata</taxon>
        <taxon>Toxicofera</taxon>
        <taxon>Serpentes</taxon>
        <taxon>Colubroidea</taxon>
        <taxon>Elapidae</taxon>
        <taxon>Hydrophiinae</taxon>
        <taxon>Notechis</taxon>
    </lineage>
</organism>
<sequence>SNSLFEEVRPIVNGMDCKLG</sequence>
<protein>
    <recommendedName>
        <fullName>Venom prothrombin activator notanarin-D</fullName>
        <shortName>vPA</shortName>
        <ecNumber>3.4.21.6</ecNumber>
    </recommendedName>
    <alternativeName>
        <fullName>Venom coagulation factor Xa-like protease</fullName>
    </alternativeName>
    <component>
        <recommendedName>
            <fullName>Notanarin-D light chain</fullName>
        </recommendedName>
    </component>
    <component>
        <recommendedName>
            <fullName>Notanarin-D heavy chain</fullName>
        </recommendedName>
    </component>
</protein>
<evidence type="ECO:0000255" key="1">
    <source>
        <dbReference type="PROSITE-ProRule" id="PRU00274"/>
    </source>
</evidence>
<evidence type="ECO:0000255" key="2">
    <source>
        <dbReference type="PROSITE-ProRule" id="PRU00463"/>
    </source>
</evidence>
<evidence type="ECO:0000269" key="3">
    <source>
    </source>
</evidence>
<evidence type="ECO:0000305" key="4"/>
<proteinExistence type="evidence at protein level"/>
<reference key="1">
    <citation type="journal article" date="2003" name="Biochem. J.">
        <title>Group D prothrombin activators from snake venom are structural homologues of mammalian blood coagulation factor Xa.</title>
        <authorList>
            <person name="Rao V.S."/>
            <person name="Joseph J.S."/>
            <person name="Kini R.M."/>
        </authorList>
    </citation>
    <scope>PROTEIN SEQUENCE</scope>
    <scope>FUNCTION</scope>
    <scope>SUBUNIT</scope>
    <scope>SUBCELLULAR LOCATION</scope>
    <scope>TISSUE SPECIFICITY</scope>
    <scope>GAMMA-CARBOXYGLUTAMATION AT GLU-6 AND GLU-7</scope>
    <scope>IDENTIFICATION BY MASS SPECTROMETRY</scope>
    <source>
        <tissue>Venom</tissue>
    </source>
</reference>
<reference key="2">
    <citation type="journal article" date="2001" name="Thromb. Haemost.">
        <title>Classification and nomenclature of prothrombin activators isolated from snake venoms.</title>
        <authorList>
            <person name="Manjunatha Kini R."/>
            <person name="Morita T."/>
            <person name="Rosing J."/>
        </authorList>
    </citation>
    <scope>NOMENCLATURE</scope>
</reference>
<dbReference type="EC" id="3.4.21.6"/>
<dbReference type="GO" id="GO:0005576">
    <property type="term" value="C:extracellular region"/>
    <property type="evidence" value="ECO:0007669"/>
    <property type="project" value="UniProtKB-SubCell"/>
</dbReference>
<dbReference type="GO" id="GO:0016504">
    <property type="term" value="F:peptidase activator activity"/>
    <property type="evidence" value="ECO:0007669"/>
    <property type="project" value="UniProtKB-KW"/>
</dbReference>
<dbReference type="GO" id="GO:0004252">
    <property type="term" value="F:serine-type endopeptidase activity"/>
    <property type="evidence" value="ECO:0007669"/>
    <property type="project" value="UniProtKB-EC"/>
</dbReference>
<dbReference type="GO" id="GO:0090729">
    <property type="term" value="F:toxin activity"/>
    <property type="evidence" value="ECO:0007669"/>
    <property type="project" value="UniProtKB-KW"/>
</dbReference>
<dbReference type="GO" id="GO:0006508">
    <property type="term" value="P:proteolysis"/>
    <property type="evidence" value="ECO:0007669"/>
    <property type="project" value="UniProtKB-KW"/>
</dbReference>
<accession>P0CY52</accession>
<feature type="chain" id="PRO_0000409891" description="Notanarin-D light chain">
    <location>
        <begin position="1"/>
        <end position="10" status="greater than"/>
    </location>
</feature>
<feature type="chain" id="PRO_0000409892" description="Notanarin-D heavy chain">
    <location>
        <begin position="11"/>
        <end position="20" status="greater than"/>
    </location>
</feature>
<feature type="domain" description="Gla" evidence="2">
    <location>
        <begin position="1"/>
        <end position="10" status="greater than"/>
    </location>
</feature>
<feature type="domain" description="Peptidase S1" evidence="1">
    <location>
        <begin position="11"/>
        <end position="20" status="greater than"/>
    </location>
</feature>
<feature type="modified residue" description="4-carboxyglutamate" evidence="2 3">
    <location>
        <position position="6"/>
    </location>
</feature>
<feature type="modified residue" description="4-carboxyglutamate" evidence="2 3">
    <location>
        <position position="7"/>
    </location>
</feature>
<feature type="unsure residue" description="Assigned by comparison with orthologs">
    <location>
        <position position="17"/>
    </location>
</feature>
<feature type="non-consecutive residues" evidence="4">
    <location>
        <begin position="10"/>
        <end position="11"/>
    </location>
</feature>
<feature type="non-terminal residue">
    <location>
        <position position="20"/>
    </location>
</feature>
<comment type="function">
    <text evidence="3">Snake prothrombin activator that attacks the hemostatic system of prey. This protein is functionally similar to blood coagulation factor Xa.</text>
</comment>
<comment type="catalytic activity">
    <reaction>
        <text>Selective cleavage of Arg-|-Thr and then Arg-|-Ile bonds in prothrombin to form thrombin.</text>
        <dbReference type="EC" id="3.4.21.6"/>
    </reaction>
</comment>
<comment type="subunit">
    <text evidence="3">Heterodimer of a light chain and a heavy chain; disulfide-linked.</text>
</comment>
<comment type="subcellular location">
    <subcellularLocation>
        <location evidence="3">Secreted</location>
    </subcellularLocation>
</comment>
<comment type="tissue specificity">
    <text evidence="3">Expressed by the venom gland.</text>
</comment>
<comment type="PTM">
    <text evidence="2 3">Gamma-carboxyglutamate residues are formed by vitamin K dependent carboxylation. These residues are essential for the binding of calcium.</text>
</comment>
<comment type="miscellaneous">
    <text>Is classified in the group D of snake venom prothrombin activators, since it requires the mammalian factor Va for maximal activity for the cleavage of prothrombin. The venom of this species does not contain its own coagulation factor V-like.</text>
</comment>
<comment type="miscellaneous">
    <text>In contrast to blood coagulation factors that circulate as inactive zymogen in plasma, venom prothrombin activators are always found in the active form in the venom.</text>
</comment>
<comment type="similarity">
    <text evidence="1">Belongs to the peptidase S1 family. Snake venom subfamily.</text>
</comment>